<name>LUXU_VIBVY</name>
<protein>
    <recommendedName>
        <fullName>Phosphorelay protein LuxU</fullName>
    </recommendedName>
</protein>
<evidence type="ECO:0000250" key="1"/>
<evidence type="ECO:0000255" key="2">
    <source>
        <dbReference type="PROSITE-ProRule" id="PRU00110"/>
    </source>
</evidence>
<evidence type="ECO:0000305" key="3"/>
<proteinExistence type="inferred from homology"/>
<sequence length="115" mass="12752">MELLNQKKIASLTEEIGADNVPVLLEIFLSELESYLKVLCDATYSDKLVYLKDISHALKSSAASFGADALCHFAVEIDTRAKEGDALDETQDVVAMIDRLHQTQQAYLSWQANGF</sequence>
<organism>
    <name type="scientific">Vibrio vulnificus (strain YJ016)</name>
    <dbReference type="NCBI Taxonomy" id="196600"/>
    <lineage>
        <taxon>Bacteria</taxon>
        <taxon>Pseudomonadati</taxon>
        <taxon>Pseudomonadota</taxon>
        <taxon>Gammaproteobacteria</taxon>
        <taxon>Vibrionales</taxon>
        <taxon>Vibrionaceae</taxon>
        <taxon>Vibrio</taxon>
    </lineage>
</organism>
<gene>
    <name type="primary">luxU</name>
    <name type="ordered locus">VV1196</name>
</gene>
<dbReference type="EMBL" id="BA000037">
    <property type="protein sequence ID" value="BAC93960.1"/>
    <property type="status" value="ALT_INIT"/>
    <property type="molecule type" value="Genomic_DNA"/>
</dbReference>
<dbReference type="RefSeq" id="WP_011080891.1">
    <property type="nucleotide sequence ID" value="NC_005139.1"/>
</dbReference>
<dbReference type="SMR" id="Q7MM77"/>
<dbReference type="STRING" id="672.VV93_v1c11150"/>
<dbReference type="KEGG" id="vvy:VV1196"/>
<dbReference type="eggNOG" id="COG2198">
    <property type="taxonomic scope" value="Bacteria"/>
</dbReference>
<dbReference type="HOGENOM" id="CLU_168256_0_0_6"/>
<dbReference type="Proteomes" id="UP000002675">
    <property type="component" value="Chromosome I"/>
</dbReference>
<dbReference type="GO" id="GO:0004672">
    <property type="term" value="F:protein kinase activity"/>
    <property type="evidence" value="ECO:0007669"/>
    <property type="project" value="UniProtKB-ARBA"/>
</dbReference>
<dbReference type="GO" id="GO:0000160">
    <property type="term" value="P:phosphorelay signal transduction system"/>
    <property type="evidence" value="ECO:0007669"/>
    <property type="project" value="UniProtKB-KW"/>
</dbReference>
<dbReference type="Gene3D" id="1.20.120.160">
    <property type="entry name" value="HPT domain"/>
    <property type="match status" value="1"/>
</dbReference>
<dbReference type="InterPro" id="IPR036641">
    <property type="entry name" value="HPT_dom_sf"/>
</dbReference>
<dbReference type="InterPro" id="IPR053403">
    <property type="entry name" value="QS_phosphorelay_intermediate"/>
</dbReference>
<dbReference type="InterPro" id="IPR008207">
    <property type="entry name" value="Sig_transdc_His_kin_Hpt_dom"/>
</dbReference>
<dbReference type="NCBIfam" id="NF041948">
    <property type="entry name" value="Phrelay_LuxU_Vib"/>
    <property type="match status" value="1"/>
</dbReference>
<dbReference type="Pfam" id="PF01627">
    <property type="entry name" value="Hpt"/>
    <property type="match status" value="1"/>
</dbReference>
<dbReference type="SUPFAM" id="SSF47226">
    <property type="entry name" value="Histidine-containing phosphotransfer domain, HPT domain"/>
    <property type="match status" value="1"/>
</dbReference>
<dbReference type="PROSITE" id="PS50894">
    <property type="entry name" value="HPT"/>
    <property type="match status" value="1"/>
</dbReference>
<reference key="1">
    <citation type="journal article" date="2003" name="Genome Res.">
        <title>Comparative genome analysis of Vibrio vulnificus, a marine pathogen.</title>
        <authorList>
            <person name="Chen C.-Y."/>
            <person name="Wu K.-M."/>
            <person name="Chang Y.-C."/>
            <person name="Chang C.-H."/>
            <person name="Tsai H.-C."/>
            <person name="Liao T.-L."/>
            <person name="Liu Y.-M."/>
            <person name="Chen H.-J."/>
            <person name="Shen A.B.-T."/>
            <person name="Li J.-C."/>
            <person name="Su T.-L."/>
            <person name="Shao C.-P."/>
            <person name="Lee C.-T."/>
            <person name="Hor L.-I."/>
            <person name="Tsai S.-F."/>
        </authorList>
    </citation>
    <scope>NUCLEOTIDE SEQUENCE [LARGE SCALE GENOMIC DNA]</scope>
    <source>
        <strain>YJ016</strain>
    </source>
</reference>
<comment type="function">
    <text>Phosphorelay protein which receives a sensory signal from a sensor kinase and transmit it to LuxO. At low cell density, a phosphoryl group is transferred from the sensor kinase, probably on His-56 and this phosphoryl group is further transferred to LuxO.</text>
</comment>
<comment type="subunit">
    <text evidence="1">Monomer.</text>
</comment>
<comment type="sequence caution" evidence="3">
    <conflict type="erroneous initiation">
        <sequence resource="EMBL-CDS" id="BAC93960"/>
    </conflict>
</comment>
<feature type="chain" id="PRO_0000220144" description="Phosphorelay protein LuxU">
    <location>
        <begin position="1"/>
        <end position="115"/>
    </location>
</feature>
<feature type="domain" description="HPt" evidence="2">
    <location>
        <begin position="17"/>
        <end position="107"/>
    </location>
</feature>
<feature type="modified residue" description="Phosphohistidine" evidence="2">
    <location>
        <position position="56"/>
    </location>
</feature>
<keyword id="KW-0597">Phosphoprotein</keyword>
<keyword id="KW-0902">Two-component regulatory system</keyword>
<accession>Q7MM77</accession>